<organism>
    <name type="scientific">Lactococcus lactis subsp. lactis (strain IL1403)</name>
    <name type="common">Streptococcus lactis</name>
    <dbReference type="NCBI Taxonomy" id="272623"/>
    <lineage>
        <taxon>Bacteria</taxon>
        <taxon>Bacillati</taxon>
        <taxon>Bacillota</taxon>
        <taxon>Bacilli</taxon>
        <taxon>Lactobacillales</taxon>
        <taxon>Streptococcaceae</taxon>
        <taxon>Lactococcus</taxon>
    </lineage>
</organism>
<protein>
    <recommendedName>
        <fullName>Hypoxanthine-guanine phosphoribosyltransferase</fullName>
        <shortName>HGPRT</shortName>
        <shortName>HGPRTase</shortName>
        <ecNumber evidence="2">2.4.2.8</ecNumber>
    </recommendedName>
</protein>
<sequence>MLEKNLDKAIEKVLVSEEEIIEKSKELGEILTKEYEGKNPLVLGILRGSVPFLAELIKHIDCHLETDFMTVSSYHGGTKSSGEVKLILDVDTAVKGRDILIVEDIIDTGRTLKYLKELLEHRGANVKIVTLLDKPEGRIVEIKPDYSGFTIPNEFVVGFGLDYEENYRNLPYVGVLKPEVYNK</sequence>
<keyword id="KW-0963">Cytoplasm</keyword>
<keyword id="KW-0328">Glycosyltransferase</keyword>
<keyword id="KW-0460">Magnesium</keyword>
<keyword id="KW-0479">Metal-binding</keyword>
<keyword id="KW-0547">Nucleotide-binding</keyword>
<keyword id="KW-0660">Purine salvage</keyword>
<keyword id="KW-1185">Reference proteome</keyword>
<keyword id="KW-0808">Transferase</keyword>
<feature type="chain" id="PRO_0000139604" description="Hypoxanthine-guanine phosphoribosyltransferase">
    <location>
        <begin position="1"/>
        <end position="183"/>
    </location>
</feature>
<feature type="active site" description="Proton acceptor" evidence="1">
    <location>
        <position position="107"/>
    </location>
</feature>
<feature type="binding site" evidence="2">
    <location>
        <position position="47"/>
    </location>
    <ligand>
        <name>diphosphate</name>
        <dbReference type="ChEBI" id="CHEBI:33019"/>
    </ligand>
</feature>
<feature type="binding site" evidence="2">
    <location>
        <position position="48"/>
    </location>
    <ligand>
        <name>diphosphate</name>
        <dbReference type="ChEBI" id="CHEBI:33019"/>
    </ligand>
</feature>
<feature type="binding site" evidence="2">
    <location>
        <position position="103"/>
    </location>
    <ligand>
        <name>Mg(2+)</name>
        <dbReference type="ChEBI" id="CHEBI:18420"/>
    </ligand>
</feature>
<feature type="binding site" evidence="2">
    <location>
        <position position="104"/>
    </location>
    <ligand>
        <name>Mg(2+)</name>
        <dbReference type="ChEBI" id="CHEBI:18420"/>
    </ligand>
</feature>
<feature type="binding site" evidence="2">
    <location>
        <position position="134"/>
    </location>
    <ligand>
        <name>GMP</name>
        <dbReference type="ChEBI" id="CHEBI:58115"/>
    </ligand>
</feature>
<feature type="binding site" evidence="2">
    <location>
        <begin position="155"/>
        <end position="156"/>
    </location>
    <ligand>
        <name>GMP</name>
        <dbReference type="ChEBI" id="CHEBI:58115"/>
    </ligand>
</feature>
<feature type="binding site" evidence="2">
    <location>
        <position position="162"/>
    </location>
    <ligand>
        <name>GMP</name>
        <dbReference type="ChEBI" id="CHEBI:58115"/>
    </ligand>
</feature>
<feature type="binding site" evidence="2">
    <location>
        <position position="168"/>
    </location>
    <ligand>
        <name>diphosphate</name>
        <dbReference type="ChEBI" id="CHEBI:33019"/>
    </ligand>
</feature>
<comment type="function">
    <text evidence="2">Purine salvage pathway enzyme that catalyzes the transfer of the ribosyl-5-phosphate group from 5-phospho-alpha-D-ribose 1-diphosphate (PRPP) to the N9 position of the 6-oxopurines hypoxanthine and guanine to form the corresponding ribonucleotides IMP (inosine 5'-monophosphate) and GMP (guanosine 5'-monophosphate), with the release of PPi.</text>
</comment>
<comment type="catalytic activity">
    <reaction evidence="2">
        <text>IMP + diphosphate = hypoxanthine + 5-phospho-alpha-D-ribose 1-diphosphate</text>
        <dbReference type="Rhea" id="RHEA:17973"/>
        <dbReference type="ChEBI" id="CHEBI:17368"/>
        <dbReference type="ChEBI" id="CHEBI:33019"/>
        <dbReference type="ChEBI" id="CHEBI:58017"/>
        <dbReference type="ChEBI" id="CHEBI:58053"/>
        <dbReference type="EC" id="2.4.2.8"/>
    </reaction>
    <physiologicalReaction direction="right-to-left" evidence="2">
        <dbReference type="Rhea" id="RHEA:17975"/>
    </physiologicalReaction>
</comment>
<comment type="catalytic activity">
    <reaction evidence="2">
        <text>GMP + diphosphate = guanine + 5-phospho-alpha-D-ribose 1-diphosphate</text>
        <dbReference type="Rhea" id="RHEA:25424"/>
        <dbReference type="ChEBI" id="CHEBI:16235"/>
        <dbReference type="ChEBI" id="CHEBI:33019"/>
        <dbReference type="ChEBI" id="CHEBI:58017"/>
        <dbReference type="ChEBI" id="CHEBI:58115"/>
        <dbReference type="EC" id="2.4.2.8"/>
    </reaction>
    <physiologicalReaction direction="right-to-left" evidence="2">
        <dbReference type="Rhea" id="RHEA:25426"/>
    </physiologicalReaction>
</comment>
<comment type="cofactor">
    <cofactor evidence="2">
        <name>Mg(2+)</name>
        <dbReference type="ChEBI" id="CHEBI:18420"/>
    </cofactor>
</comment>
<comment type="pathway">
    <text evidence="2">Purine metabolism; IMP biosynthesis via salvage pathway; IMP from hypoxanthine: step 1/1.</text>
</comment>
<comment type="pathway">
    <text evidence="2">Purine metabolism; GMP biosynthesis via salvage pathway; GMP from guanine: step 1/1.</text>
</comment>
<comment type="subcellular location">
    <subcellularLocation>
        <location>Cytoplasm</location>
    </subcellularLocation>
</comment>
<comment type="similarity">
    <text evidence="3">Belongs to the purine/pyrimidine phosphoribosyltransferase family.</text>
</comment>
<reference key="1">
    <citation type="journal article" date="1992" name="Mol. Gen. Genet.">
        <title>Isolation of purine auxotrophic mutants of Lactococcus lactis and characterization of the gene hpt encoding hypoxanthine guanine phosphoribosyltransferase.</title>
        <authorList>
            <person name="Nilsson D."/>
            <person name="Lauridsen A.A."/>
        </authorList>
    </citation>
    <scope>NUCLEOTIDE SEQUENCE [GENOMIC DNA]</scope>
    <source>
        <strain>CHCC285</strain>
    </source>
</reference>
<reference key="2">
    <citation type="journal article" date="2001" name="Genome Res.">
        <title>The complete genome sequence of the lactic acid bacterium Lactococcus lactis ssp. lactis IL1403.</title>
        <authorList>
            <person name="Bolotin A."/>
            <person name="Wincker P."/>
            <person name="Mauger S."/>
            <person name="Jaillon O."/>
            <person name="Malarme K."/>
            <person name="Weissenbach J."/>
            <person name="Ehrlich S.D."/>
            <person name="Sorokin A."/>
        </authorList>
    </citation>
    <scope>NUCLEOTIDE SEQUENCE [LARGE SCALE GENOMIC DNA]</scope>
    <source>
        <strain>IL1403</strain>
    </source>
</reference>
<evidence type="ECO:0000250" key="1">
    <source>
        <dbReference type="UniProtKB" id="P0A9M2"/>
    </source>
</evidence>
<evidence type="ECO:0000250" key="2">
    <source>
        <dbReference type="UniProtKB" id="P9WHQ9"/>
    </source>
</evidence>
<evidence type="ECO:0000305" key="3"/>
<gene>
    <name type="primary">hpt</name>
    <name type="ordered locus">LL0020</name>
    <name type="ORF">L25115</name>
</gene>
<proteinExistence type="inferred from homology"/>
<accession>Q02522</accession>
<name>HGPRT_LACLA</name>
<dbReference type="EC" id="2.4.2.8" evidence="2"/>
<dbReference type="EMBL" id="X67015">
    <property type="protein sequence ID" value="CAA47404.1"/>
    <property type="molecule type" value="Genomic_DNA"/>
</dbReference>
<dbReference type="EMBL" id="X69123">
    <property type="protein sequence ID" value="CAA48876.1"/>
    <property type="molecule type" value="Genomic_DNA"/>
</dbReference>
<dbReference type="EMBL" id="AE005176">
    <property type="protein sequence ID" value="AAK04118.1"/>
    <property type="molecule type" value="Genomic_DNA"/>
</dbReference>
<dbReference type="PIR" id="D86627">
    <property type="entry name" value="D86627"/>
</dbReference>
<dbReference type="PIR" id="S30100">
    <property type="entry name" value="S30100"/>
</dbReference>
<dbReference type="RefSeq" id="NP_266176.1">
    <property type="nucleotide sequence ID" value="NC_002662.1"/>
</dbReference>
<dbReference type="RefSeq" id="WP_010905038.1">
    <property type="nucleotide sequence ID" value="NC_002662.1"/>
</dbReference>
<dbReference type="SMR" id="Q02522"/>
<dbReference type="PaxDb" id="272623-L25115"/>
<dbReference type="EnsemblBacteria" id="AAK04118">
    <property type="protein sequence ID" value="AAK04118"/>
    <property type="gene ID" value="L25115"/>
</dbReference>
<dbReference type="GeneID" id="89632189"/>
<dbReference type="KEGG" id="lla:L25115"/>
<dbReference type="PATRIC" id="fig|272623.7.peg.22"/>
<dbReference type="eggNOG" id="COG0634">
    <property type="taxonomic scope" value="Bacteria"/>
</dbReference>
<dbReference type="HOGENOM" id="CLU_073615_0_1_9"/>
<dbReference type="OrthoDB" id="9802824at2"/>
<dbReference type="UniPathway" id="UPA00591">
    <property type="reaction ID" value="UER00648"/>
</dbReference>
<dbReference type="UniPathway" id="UPA00909">
    <property type="reaction ID" value="UER00887"/>
</dbReference>
<dbReference type="Proteomes" id="UP000002196">
    <property type="component" value="Chromosome"/>
</dbReference>
<dbReference type="GO" id="GO:0005829">
    <property type="term" value="C:cytosol"/>
    <property type="evidence" value="ECO:0007669"/>
    <property type="project" value="TreeGrafter"/>
</dbReference>
<dbReference type="GO" id="GO:0052657">
    <property type="term" value="F:guanine phosphoribosyltransferase activity"/>
    <property type="evidence" value="ECO:0007669"/>
    <property type="project" value="RHEA"/>
</dbReference>
<dbReference type="GO" id="GO:0004422">
    <property type="term" value="F:hypoxanthine phosphoribosyltransferase activity"/>
    <property type="evidence" value="ECO:0007669"/>
    <property type="project" value="InterPro"/>
</dbReference>
<dbReference type="GO" id="GO:0000287">
    <property type="term" value="F:magnesium ion binding"/>
    <property type="evidence" value="ECO:0007669"/>
    <property type="project" value="TreeGrafter"/>
</dbReference>
<dbReference type="GO" id="GO:0000166">
    <property type="term" value="F:nucleotide binding"/>
    <property type="evidence" value="ECO:0007669"/>
    <property type="project" value="UniProtKB-KW"/>
</dbReference>
<dbReference type="GO" id="GO:0032263">
    <property type="term" value="P:GMP salvage"/>
    <property type="evidence" value="ECO:0007669"/>
    <property type="project" value="UniProtKB-UniPathway"/>
</dbReference>
<dbReference type="GO" id="GO:0006178">
    <property type="term" value="P:guanine salvage"/>
    <property type="evidence" value="ECO:0007669"/>
    <property type="project" value="TreeGrafter"/>
</dbReference>
<dbReference type="GO" id="GO:0046100">
    <property type="term" value="P:hypoxanthine metabolic process"/>
    <property type="evidence" value="ECO:0007669"/>
    <property type="project" value="TreeGrafter"/>
</dbReference>
<dbReference type="GO" id="GO:0032264">
    <property type="term" value="P:IMP salvage"/>
    <property type="evidence" value="ECO:0007669"/>
    <property type="project" value="UniProtKB-UniPathway"/>
</dbReference>
<dbReference type="GO" id="GO:0006166">
    <property type="term" value="P:purine ribonucleoside salvage"/>
    <property type="evidence" value="ECO:0007669"/>
    <property type="project" value="UniProtKB-KW"/>
</dbReference>
<dbReference type="CDD" id="cd06223">
    <property type="entry name" value="PRTases_typeI"/>
    <property type="match status" value="1"/>
</dbReference>
<dbReference type="FunFam" id="3.40.50.2020:FF:000006">
    <property type="entry name" value="Hypoxanthine phosphoribosyltransferase"/>
    <property type="match status" value="1"/>
</dbReference>
<dbReference type="Gene3D" id="3.40.50.2020">
    <property type="match status" value="1"/>
</dbReference>
<dbReference type="InterPro" id="IPR050408">
    <property type="entry name" value="HGPRT"/>
</dbReference>
<dbReference type="InterPro" id="IPR005904">
    <property type="entry name" value="Hxn_phspho_trans"/>
</dbReference>
<dbReference type="InterPro" id="IPR000836">
    <property type="entry name" value="PRibTrfase_dom"/>
</dbReference>
<dbReference type="InterPro" id="IPR029057">
    <property type="entry name" value="PRTase-like"/>
</dbReference>
<dbReference type="NCBIfam" id="TIGR01203">
    <property type="entry name" value="HGPRTase"/>
    <property type="match status" value="1"/>
</dbReference>
<dbReference type="PANTHER" id="PTHR43340:SF1">
    <property type="entry name" value="HYPOXANTHINE PHOSPHORIBOSYLTRANSFERASE"/>
    <property type="match status" value="1"/>
</dbReference>
<dbReference type="PANTHER" id="PTHR43340">
    <property type="entry name" value="HYPOXANTHINE-GUANINE PHOSPHORIBOSYLTRANSFERASE"/>
    <property type="match status" value="1"/>
</dbReference>
<dbReference type="Pfam" id="PF00156">
    <property type="entry name" value="Pribosyltran"/>
    <property type="match status" value="1"/>
</dbReference>
<dbReference type="SUPFAM" id="SSF53271">
    <property type="entry name" value="PRTase-like"/>
    <property type="match status" value="1"/>
</dbReference>
<dbReference type="PROSITE" id="PS00103">
    <property type="entry name" value="PUR_PYR_PR_TRANSFER"/>
    <property type="match status" value="1"/>
</dbReference>